<evidence type="ECO:0000269" key="1">
    <source>
    </source>
</evidence>
<evidence type="ECO:0000269" key="2">
    <source>
    </source>
</evidence>
<evidence type="ECO:0000303" key="3">
    <source>
    </source>
</evidence>
<evidence type="ECO:0000305" key="4"/>
<evidence type="ECO:0000305" key="5">
    <source>
    </source>
</evidence>
<evidence type="ECO:0000312" key="6">
    <source>
        <dbReference type="EMBL" id="ACI56177.1"/>
    </source>
</evidence>
<evidence type="ECO:0007744" key="7">
    <source>
        <dbReference type="PDB" id="5J83"/>
    </source>
</evidence>
<evidence type="ECO:0007744" key="8">
    <source>
        <dbReference type="PDB" id="5J84"/>
    </source>
</evidence>
<evidence type="ECO:0007744" key="9">
    <source>
        <dbReference type="PDB" id="5J85"/>
    </source>
</evidence>
<evidence type="ECO:0007829" key="10">
    <source>
        <dbReference type="PDB" id="5J84"/>
    </source>
</evidence>
<gene>
    <name evidence="3" type="primary">araD</name>
    <name evidence="6" type="ordered locus">Rleg2_2909</name>
</gene>
<proteinExistence type="evidence at protein level"/>
<accession>B5ZZ34</accession>
<keyword id="KW-0001">2Fe-2S</keyword>
<keyword id="KW-0002">3D-structure</keyword>
<keyword id="KW-0054">Arabinose catabolism</keyword>
<keyword id="KW-0119">Carbohydrate metabolism</keyword>
<keyword id="KW-0408">Iron</keyword>
<keyword id="KW-0411">Iron-sulfur</keyword>
<keyword id="KW-0456">Lyase</keyword>
<keyword id="KW-0460">Magnesium</keyword>
<keyword id="KW-0479">Metal-binding</keyword>
<keyword id="KW-1185">Reference proteome</keyword>
<reference key="1">
    <citation type="journal article" date="2010" name="Stand. Genomic Sci.">
        <title>Complete genome sequence of Rhizobium leguminosarum bv trifolii strain WSM2304, an effective microsymbiont of the South American clover Trifolium polymorphum.</title>
        <authorList>
            <person name="Reeve W."/>
            <person name="O'Hara G."/>
            <person name="Chain P."/>
            <person name="Ardley J."/>
            <person name="Brau L."/>
            <person name="Nandesena K."/>
            <person name="Tiwari R."/>
            <person name="Malfatti S."/>
            <person name="Kiss H."/>
            <person name="Lapidus A."/>
            <person name="Copeland A."/>
            <person name="Nolan M."/>
            <person name="Land M."/>
            <person name="Ivanova N."/>
            <person name="Mavromatis K."/>
            <person name="Markowitz V."/>
            <person name="Kyrpides N."/>
            <person name="Melino V."/>
            <person name="Denton M."/>
            <person name="Yates R."/>
            <person name="Howieson J."/>
        </authorList>
    </citation>
    <scope>NUCLEOTIDE SEQUENCE [LARGE SCALE GENOMIC DNA]</scope>
    <source>
        <strain>WSM2304</strain>
    </source>
</reference>
<reference key="2">
    <citation type="journal article" date="2016" name="Appl. Microbiol. Biotechnol.">
        <title>Characterization and mutagenesis of two novel iron-sulphur cluster pentonate dehydratases.</title>
        <authorList>
            <person name="Andberg M."/>
            <person name="Aro-Kaerkkaeinen N."/>
            <person name="Carlson P."/>
            <person name="Oja M."/>
            <person name="Bozonnet S."/>
            <person name="Toivari M."/>
            <person name="Hakulinen N."/>
            <person name="O'Donohue M."/>
            <person name="Penttilae M."/>
            <person name="Koivula A."/>
        </authorList>
    </citation>
    <scope>FUNCTION</scope>
    <scope>CATALYTIC ACTIVITY</scope>
    <scope>COFACTOR</scope>
    <scope>IRON-SULFUR CLUSTER</scope>
    <scope>BIOPHYSICOCHEMICAL PROPERTIES</scope>
    <scope>SUBUNIT</scope>
    <scope>MUTAGENESIS OF CYS-59; CYS-127; CYS-200; CYS-436 AND CYS-443</scope>
</reference>
<reference key="3">
    <citation type="journal article" date="2016" name="Acta Crystallogr. F Struct. Biol. Commun.">
        <title>Crystallization and X-ray diffraction analysis of an L-arabinonate dehydratase from Rhizobium leguminosarum bv. trifolii and a D-xylonate dehydratase from Caulobacter crescentus.</title>
        <authorList>
            <person name="Rahman M.M."/>
            <person name="Andberg M."/>
            <person name="Koivula A."/>
            <person name="Rouvinen J."/>
            <person name="Hakulinen N."/>
        </authorList>
    </citation>
    <scope>CRYSTALLIZATION</scope>
</reference>
<reference evidence="7 8 9" key="4">
    <citation type="journal article" date="2017" name="ACS Chem. Biol.">
        <title>The crystal structure of a bacterial L-arabinonate dehydratase contains a [2Fe-2S] cluster.</title>
        <authorList>
            <person name="Rahman M.M."/>
            <person name="Andberg M."/>
            <person name="Thangaraj S.K."/>
            <person name="Parkkinen T."/>
            <person name="Penttila M."/>
            <person name="Janis J."/>
            <person name="Koivula A."/>
            <person name="Rouvinen J."/>
            <person name="Hakulinen N."/>
        </authorList>
    </citation>
    <scope>X-RAY CRYSTALLOGRAPHY (2.40 ANGSTROMS) OF 2-579 OF APOENZYME; IN COMPLEX WITH 2FE-2S AND MAGNESIUM AND OF MUTANT ALA-480</scope>
    <scope>COFACTOR</scope>
    <scope>SUBUNIT</scope>
    <scope>MUTAGENESIS OF SER-480</scope>
</reference>
<sequence>MKKKAEWPRKLRSQEWYGGTSRDVIYHRGWLKNQGYPHDLFDGRPVIGILNTWSDMTPCNGHLRELAEKVKAGVWEAGGFPLEVPVFSASENTFRPTAMMYRNLAALAVEEAIRGQPMDGCVLLVGCDKTTPSLLMGAASCDLPSIVVTGGPMLNGYFRGERVGSGTHLWKFSEMVKAGEMTQAEFLEAEASMSRSSGTCNTMGTASTMASMAEALGMALSGNAAIPGVDSRRKVMAQLTGRRIVQMVKDDLKPSEIMTKQAFENAIRTNAAIGGSTNAVIHLLAIAGRVGIDLSLDDWDRCGRDVPTIVNLMPSGKYLMEEFFYAGGLPVVLKRLGEAGLLHKDALTVSGETVWDEVKDVVNWNEDVILPAEKALTSSGGIVVLRGNLAPKGAVLKPSAASPHLLVHKGRAVVFEDIDDYKAKINDDNLDIDENCIMVMKNCGPKGYPGMAEVGNMGLPPKVLKKGILDMVRISDARMSGTAYGTVVLHTSPEAAVGGPLAVVKNGDMIELDVPNRRLHLDISDEELARRLAEWQPNHDLPTSGYAFLHQQHVEGADTGADLDFLKGCRGNAVGKDSH</sequence>
<organism>
    <name type="scientific">Rhizobium leguminosarum bv. trifolii (strain WSM2304)</name>
    <dbReference type="NCBI Taxonomy" id="395492"/>
    <lineage>
        <taxon>Bacteria</taxon>
        <taxon>Pseudomonadati</taxon>
        <taxon>Pseudomonadota</taxon>
        <taxon>Alphaproteobacteria</taxon>
        <taxon>Hyphomicrobiales</taxon>
        <taxon>Rhizobiaceae</taxon>
        <taxon>Rhizobium/Agrobacterium group</taxon>
        <taxon>Rhizobium</taxon>
    </lineage>
</organism>
<comment type="function">
    <text evidence="1">Catalyzes the dehydration of L-arabinonate to 2-dehydro-3-deoxy-L-arabinonate during L-arabinose degradation. Can also dehydrate D-galactonate and D-fuconate with good catalytic efficiency. Has weak activity with D-xylonate and D-gluconate.</text>
</comment>
<comment type="catalytic activity">
    <reaction evidence="1">
        <text>L-arabinonate = 2-dehydro-3-deoxy-L-arabinonate + H2O</text>
        <dbReference type="Rhea" id="RHEA:20968"/>
        <dbReference type="ChEBI" id="CHEBI:15377"/>
        <dbReference type="ChEBI" id="CHEBI:16501"/>
        <dbReference type="ChEBI" id="CHEBI:35173"/>
        <dbReference type="EC" id="4.2.1.25"/>
    </reaction>
</comment>
<comment type="catalytic activity">
    <reaction evidence="1">
        <text>D-galactonate = 2-dehydro-3-deoxy-D-galactonate + H2O</text>
        <dbReference type="Rhea" id="RHEA:18649"/>
        <dbReference type="ChEBI" id="CHEBI:12931"/>
        <dbReference type="ChEBI" id="CHEBI:15377"/>
        <dbReference type="ChEBI" id="CHEBI:57989"/>
        <dbReference type="EC" id="4.2.1.6"/>
    </reaction>
</comment>
<comment type="catalytic activity">
    <reaction evidence="1">
        <text>D-fuconate = 2-dehydro-3-deoxy-D-fuconate + H2O</text>
        <dbReference type="Rhea" id="RHEA:12949"/>
        <dbReference type="ChEBI" id="CHEBI:15377"/>
        <dbReference type="ChEBI" id="CHEBI:35372"/>
        <dbReference type="ChEBI" id="CHEBI:58378"/>
        <dbReference type="EC" id="4.2.1.67"/>
    </reaction>
</comment>
<comment type="cofactor">
    <cofactor evidence="2 5">
        <name>[2Fe-2S] cluster</name>
        <dbReference type="ChEBI" id="CHEBI:190135"/>
    </cofactor>
</comment>
<comment type="cofactor">
    <cofactor evidence="1 2">
        <name>Mg(2+)</name>
        <dbReference type="ChEBI" id="CHEBI:18420"/>
    </cofactor>
</comment>
<comment type="biophysicochemical properties">
    <kinetics>
        <KM evidence="1">1.8 mM for L-arabinonate</KM>
        <KM evidence="1">3.8 mM for D-galactonate</KM>
        <KM evidence="1">1.8 mM for D-fuconate</KM>
        <KM evidence="1">9.2 mM for D-xylonate</KM>
        <KM evidence="1">11.9 mM for D-gluconate</KM>
        <text evidence="1">kcat is 728 min(-1) with L-arabinonate as substrate. kcat is 1377 min(-1) with D-galactonate as substrate. kcat is 2949 min(-1) with D-fuconate as substrate. kcat is 349 min(-1) with D-xylonate as substrate. kcat is 431 min(-1) with D-gluconate as substrate.</text>
    </kinetics>
    <phDependence>
        <text evidence="1">Optimum pH is 8.0.</text>
    </phDependence>
</comment>
<comment type="pathway">
    <text evidence="4">Carbohydrate metabolism.</text>
</comment>
<comment type="subunit">
    <text evidence="1 2">Homotetramer.</text>
</comment>
<comment type="similarity">
    <text evidence="4">Belongs to the IlvD/Edd family.</text>
</comment>
<protein>
    <recommendedName>
        <fullName evidence="4">L-arabinonate dehydratase</fullName>
        <shortName evidence="3">ArDHT</shortName>
        <ecNumber evidence="1">4.2.1.25</ecNumber>
    </recommendedName>
    <alternativeName>
        <fullName evidence="4">D-fuconate dehydratase</fullName>
        <ecNumber evidence="1">4.2.1.67</ecNumber>
    </alternativeName>
    <alternativeName>
        <fullName evidence="4">Galactonate dehydratase</fullName>
        <ecNumber evidence="1">4.2.1.6</ecNumber>
    </alternativeName>
    <alternativeName>
        <fullName evidence="3">L-arabonate dehydratase</fullName>
    </alternativeName>
</protein>
<name>ARAD_RHILW</name>
<feature type="chain" id="PRO_0000448799" description="L-arabinonate dehydratase">
    <location>
        <begin position="1"/>
        <end position="579"/>
    </location>
</feature>
<feature type="binding site" evidence="2">
    <location>
        <position position="59"/>
    </location>
    <ligand>
        <name>[2Fe-2S] cluster</name>
        <dbReference type="ChEBI" id="CHEBI:190135"/>
    </ligand>
</feature>
<feature type="binding site" evidence="2">
    <location>
        <position position="91"/>
    </location>
    <ligand>
        <name>Mg(2+)</name>
        <dbReference type="ChEBI" id="CHEBI:18420"/>
    </ligand>
</feature>
<feature type="binding site" evidence="2">
    <location>
        <position position="127"/>
    </location>
    <ligand>
        <name>[2Fe-2S] cluster</name>
        <dbReference type="ChEBI" id="CHEBI:190135"/>
    </ligand>
</feature>
<feature type="binding site" evidence="2">
    <location>
        <position position="128"/>
    </location>
    <ligand>
        <name>Mg(2+)</name>
        <dbReference type="ChEBI" id="CHEBI:18420"/>
    </ligand>
</feature>
<feature type="binding site" evidence="2">
    <location>
        <position position="200"/>
    </location>
    <ligand>
        <name>[2Fe-2S] cluster</name>
        <dbReference type="ChEBI" id="CHEBI:190135"/>
    </ligand>
</feature>
<feature type="binding site" evidence="2">
    <location>
        <position position="453"/>
    </location>
    <ligand>
        <name>Mg(2+)</name>
        <dbReference type="ChEBI" id="CHEBI:18420"/>
    </ligand>
</feature>
<feature type="mutagenesis site" description="Loss of activity. Does not bind iron-sulfur cluster." evidence="1">
    <original>C</original>
    <variation>S</variation>
    <location>
        <position position="59"/>
    </location>
</feature>
<feature type="mutagenesis site" description="Loss of activity. Does not bind iron-sulfur cluster." evidence="1">
    <original>C</original>
    <variation>S</variation>
    <location>
        <position position="127"/>
    </location>
</feature>
<feature type="mutagenesis site" description="Almost loss of activity. Does not bind iron-sulfur cluster." evidence="1">
    <original>C</original>
    <variation>S</variation>
    <location>
        <position position="200"/>
    </location>
</feature>
<feature type="mutagenesis site" description="No change in activity. Does not affect binding of iron-sulfur cluster." evidence="1">
    <original>C</original>
    <variation>S</variation>
    <location>
        <position position="436"/>
    </location>
</feature>
<feature type="mutagenesis site" description="Slight decrease in activity. Does not affect binding of iron-sulfur cluster." evidence="1">
    <original>C</original>
    <variation>S</variation>
    <location>
        <position position="443"/>
    </location>
</feature>
<feature type="mutagenesis site" description="Loss of activity." evidence="2">
    <original>S</original>
    <variation>A</variation>
    <location>
        <position position="480"/>
    </location>
</feature>
<feature type="helix" evidence="10">
    <location>
        <begin position="14"/>
        <end position="17"/>
    </location>
</feature>
<feature type="strand" evidence="10">
    <location>
        <begin position="18"/>
        <end position="21"/>
    </location>
</feature>
<feature type="helix" evidence="10">
    <location>
        <begin position="22"/>
        <end position="31"/>
    </location>
</feature>
<feature type="helix" evidence="10">
    <location>
        <begin position="32"/>
        <end position="34"/>
    </location>
</feature>
<feature type="helix" evidence="10">
    <location>
        <begin position="38"/>
        <end position="41"/>
    </location>
</feature>
<feature type="strand" evidence="10">
    <location>
        <begin position="46"/>
        <end position="51"/>
    </location>
</feature>
<feature type="helix" evidence="10">
    <location>
        <begin position="58"/>
        <end position="60"/>
    </location>
</feature>
<feature type="helix" evidence="10">
    <location>
        <begin position="63"/>
        <end position="76"/>
    </location>
</feature>
<feature type="strand" evidence="10">
    <location>
        <begin position="80"/>
        <end position="85"/>
    </location>
</feature>
<feature type="turn" evidence="10">
    <location>
        <begin position="91"/>
        <end position="93"/>
    </location>
</feature>
<feature type="helix" evidence="10">
    <location>
        <begin position="98"/>
        <end position="101"/>
    </location>
</feature>
<feature type="helix" evidence="10">
    <location>
        <begin position="102"/>
        <end position="114"/>
    </location>
</feature>
<feature type="turn" evidence="10">
    <location>
        <begin position="115"/>
        <end position="117"/>
    </location>
</feature>
<feature type="strand" evidence="10">
    <location>
        <begin position="119"/>
        <end position="125"/>
    </location>
</feature>
<feature type="helix" evidence="10">
    <location>
        <begin position="130"/>
        <end position="139"/>
    </location>
</feature>
<feature type="strand" evidence="10">
    <location>
        <begin position="145"/>
        <end position="149"/>
    </location>
</feature>
<feature type="strand" evidence="10">
    <location>
        <begin position="156"/>
        <end position="163"/>
    </location>
</feature>
<feature type="helix" evidence="10">
    <location>
        <begin position="167"/>
        <end position="177"/>
    </location>
</feature>
<feature type="helix" evidence="10">
    <location>
        <begin position="183"/>
        <end position="189"/>
    </location>
</feature>
<feature type="helix" evidence="10">
    <location>
        <begin position="190"/>
        <end position="192"/>
    </location>
</feature>
<feature type="strand" evidence="10">
    <location>
        <begin position="196"/>
        <end position="199"/>
    </location>
</feature>
<feature type="strand" evidence="10">
    <location>
        <begin position="201"/>
        <end position="204"/>
    </location>
</feature>
<feature type="helix" evidence="10">
    <location>
        <begin position="205"/>
        <end position="215"/>
    </location>
</feature>
<feature type="turn" evidence="10">
    <location>
        <begin position="221"/>
        <end position="225"/>
    </location>
</feature>
<feature type="helix" evidence="10">
    <location>
        <begin position="231"/>
        <end position="250"/>
    </location>
</feature>
<feature type="helix" evidence="10">
    <location>
        <begin position="254"/>
        <end position="257"/>
    </location>
</feature>
<feature type="helix" evidence="10">
    <location>
        <begin position="260"/>
        <end position="273"/>
    </location>
</feature>
<feature type="helix" evidence="10">
    <location>
        <begin position="278"/>
        <end position="290"/>
    </location>
</feature>
<feature type="helix" evidence="10">
    <location>
        <begin position="296"/>
        <end position="303"/>
    </location>
</feature>
<feature type="turn" evidence="10">
    <location>
        <begin position="313"/>
        <end position="315"/>
    </location>
</feature>
<feature type="strand" evidence="10">
    <location>
        <begin position="316"/>
        <end position="318"/>
    </location>
</feature>
<feature type="helix" evidence="10">
    <location>
        <begin position="320"/>
        <end position="326"/>
    </location>
</feature>
<feature type="helix" evidence="10">
    <location>
        <begin position="329"/>
        <end position="338"/>
    </location>
</feature>
<feature type="strand" evidence="10">
    <location>
        <begin position="351"/>
        <end position="353"/>
    </location>
</feature>
<feature type="helix" evidence="10">
    <location>
        <begin position="354"/>
        <end position="358"/>
    </location>
</feature>
<feature type="turn" evidence="10">
    <location>
        <begin position="366"/>
        <end position="368"/>
    </location>
</feature>
<feature type="helix" evidence="10">
    <location>
        <begin position="372"/>
        <end position="374"/>
    </location>
</feature>
<feature type="strand" evidence="10">
    <location>
        <begin position="376"/>
        <end position="379"/>
    </location>
</feature>
<feature type="strand" evidence="10">
    <location>
        <begin position="383"/>
        <end position="389"/>
    </location>
</feature>
<feature type="strand" evidence="10">
    <location>
        <begin position="393"/>
        <end position="396"/>
    </location>
</feature>
<feature type="helix" evidence="10">
    <location>
        <begin position="398"/>
        <end position="400"/>
    </location>
</feature>
<feature type="helix" evidence="10">
    <location>
        <begin position="403"/>
        <end position="405"/>
    </location>
</feature>
<feature type="strand" evidence="10">
    <location>
        <begin position="406"/>
        <end position="417"/>
    </location>
</feature>
<feature type="helix" evidence="10">
    <location>
        <begin position="418"/>
        <end position="424"/>
    </location>
</feature>
<feature type="strand" evidence="10">
    <location>
        <begin position="436"/>
        <end position="440"/>
    </location>
</feature>
<feature type="turn" evidence="10">
    <location>
        <begin position="445"/>
        <end position="449"/>
    </location>
</feature>
<feature type="helix" evidence="10">
    <location>
        <begin position="461"/>
        <end position="464"/>
    </location>
</feature>
<feature type="turn" evidence="10">
    <location>
        <begin position="465"/>
        <end position="467"/>
    </location>
</feature>
<feature type="strand" evidence="10">
    <location>
        <begin position="473"/>
        <end position="477"/>
    </location>
</feature>
<feature type="strand" evidence="10">
    <location>
        <begin position="485"/>
        <end position="493"/>
    </location>
</feature>
<feature type="helix" evidence="10">
    <location>
        <begin position="495"/>
        <end position="497"/>
    </location>
</feature>
<feature type="helix" evidence="10">
    <location>
        <begin position="500"/>
        <end position="503"/>
    </location>
</feature>
<feature type="strand" evidence="10">
    <location>
        <begin position="509"/>
        <end position="513"/>
    </location>
</feature>
<feature type="turn" evidence="10">
    <location>
        <begin position="514"/>
        <end position="517"/>
    </location>
</feature>
<feature type="strand" evidence="10">
    <location>
        <begin position="518"/>
        <end position="521"/>
    </location>
</feature>
<feature type="helix" evidence="10">
    <location>
        <begin position="525"/>
        <end position="533"/>
    </location>
</feature>
<feature type="helix" evidence="10">
    <location>
        <begin position="545"/>
        <end position="553"/>
    </location>
</feature>
<feature type="turn" evidence="10">
    <location>
        <begin position="557"/>
        <end position="560"/>
    </location>
</feature>
<feature type="helix" evidence="10">
    <location>
        <begin position="564"/>
        <end position="566"/>
    </location>
</feature>
<dbReference type="EC" id="4.2.1.25" evidence="1"/>
<dbReference type="EC" id="4.2.1.67" evidence="1"/>
<dbReference type="EC" id="4.2.1.6" evidence="1"/>
<dbReference type="EMBL" id="CP001191">
    <property type="protein sequence ID" value="ACI56177.1"/>
    <property type="molecule type" value="Genomic_DNA"/>
</dbReference>
<dbReference type="RefSeq" id="WP_003592857.1">
    <property type="nucleotide sequence ID" value="NC_011369.1"/>
</dbReference>
<dbReference type="PDB" id="5J83">
    <property type="method" value="X-ray"/>
    <property type="resolution" value="3.00 A"/>
    <property type="chains" value="A/B=2-579"/>
</dbReference>
<dbReference type="PDB" id="5J84">
    <property type="method" value="X-ray"/>
    <property type="resolution" value="2.40 A"/>
    <property type="chains" value="A/B/C/D/E/F/G/H=2-579"/>
</dbReference>
<dbReference type="PDB" id="5J85">
    <property type="method" value="X-ray"/>
    <property type="resolution" value="2.60 A"/>
    <property type="chains" value="A=2-579"/>
</dbReference>
<dbReference type="PDB" id="9EVV">
    <property type="method" value="X-ray"/>
    <property type="resolution" value="2.44 A"/>
    <property type="chains" value="A/B/C/D=2-579"/>
</dbReference>
<dbReference type="PDBsum" id="5J83"/>
<dbReference type="PDBsum" id="5J84"/>
<dbReference type="PDBsum" id="5J85"/>
<dbReference type="PDBsum" id="9EVV"/>
<dbReference type="SMR" id="B5ZZ34"/>
<dbReference type="STRING" id="395492.Rleg2_2909"/>
<dbReference type="KEGG" id="rlt:Rleg2_2909"/>
<dbReference type="eggNOG" id="COG0129">
    <property type="taxonomic scope" value="Bacteria"/>
</dbReference>
<dbReference type="HOGENOM" id="CLU_014271_3_1_5"/>
<dbReference type="Proteomes" id="UP000008330">
    <property type="component" value="Chromosome"/>
</dbReference>
<dbReference type="GO" id="GO:0051537">
    <property type="term" value="F:2 iron, 2 sulfur cluster binding"/>
    <property type="evidence" value="ECO:0007669"/>
    <property type="project" value="UniProtKB-KW"/>
</dbReference>
<dbReference type="GO" id="GO:0047818">
    <property type="term" value="F:D-fuconate dehydratase activity"/>
    <property type="evidence" value="ECO:0007669"/>
    <property type="project" value="UniProtKB-EC"/>
</dbReference>
<dbReference type="GO" id="GO:0008869">
    <property type="term" value="F:galactonate dehydratase activity"/>
    <property type="evidence" value="ECO:0007669"/>
    <property type="project" value="UniProtKB-EC"/>
</dbReference>
<dbReference type="GO" id="GO:0050020">
    <property type="term" value="F:L-arabinonate dehydratase activity"/>
    <property type="evidence" value="ECO:0007669"/>
    <property type="project" value="UniProtKB-EC"/>
</dbReference>
<dbReference type="GO" id="GO:0046872">
    <property type="term" value="F:metal ion binding"/>
    <property type="evidence" value="ECO:0007669"/>
    <property type="project" value="UniProtKB-KW"/>
</dbReference>
<dbReference type="GO" id="GO:0019568">
    <property type="term" value="P:arabinose catabolic process"/>
    <property type="evidence" value="ECO:0007669"/>
    <property type="project" value="UniProtKB-KW"/>
</dbReference>
<dbReference type="FunFam" id="3.50.30.80:FF:000001">
    <property type="entry name" value="Dihydroxy-acid dehydratase"/>
    <property type="match status" value="1"/>
</dbReference>
<dbReference type="Gene3D" id="3.50.30.80">
    <property type="entry name" value="IlvD/EDD C-terminal domain-like"/>
    <property type="match status" value="1"/>
</dbReference>
<dbReference type="InterPro" id="IPR042096">
    <property type="entry name" value="Dihydro-acid_dehy_C"/>
</dbReference>
<dbReference type="InterPro" id="IPR056740">
    <property type="entry name" value="ILV_EDD_C"/>
</dbReference>
<dbReference type="InterPro" id="IPR000581">
    <property type="entry name" value="ILV_EDD_N"/>
</dbReference>
<dbReference type="InterPro" id="IPR037237">
    <property type="entry name" value="IlvD/EDD_N"/>
</dbReference>
<dbReference type="InterPro" id="IPR052352">
    <property type="entry name" value="Sugar_Degrad_Dehydratases"/>
</dbReference>
<dbReference type="NCBIfam" id="NF004784">
    <property type="entry name" value="PRK06131.1"/>
    <property type="match status" value="1"/>
</dbReference>
<dbReference type="NCBIfam" id="NF009559">
    <property type="entry name" value="PRK13016.1"/>
    <property type="match status" value="1"/>
</dbReference>
<dbReference type="NCBIfam" id="NF009560">
    <property type="entry name" value="PRK13017.1"/>
    <property type="match status" value="1"/>
</dbReference>
<dbReference type="PANTHER" id="PTHR43183:SF1">
    <property type="entry name" value="HYPOTHETICAL DIHYDROXY-ACID DEHYDRATASE (EUROFUNG)-RELATED"/>
    <property type="match status" value="1"/>
</dbReference>
<dbReference type="PANTHER" id="PTHR43183">
    <property type="entry name" value="HYPOTHETICAL DIHYDROXYACID DEHYDRATASE (EUROFUNG)-RELATED"/>
    <property type="match status" value="1"/>
</dbReference>
<dbReference type="Pfam" id="PF24877">
    <property type="entry name" value="ILV_EDD_C"/>
    <property type="match status" value="1"/>
</dbReference>
<dbReference type="Pfam" id="PF00920">
    <property type="entry name" value="ILVD_EDD_N"/>
    <property type="match status" value="1"/>
</dbReference>
<dbReference type="SUPFAM" id="SSF143975">
    <property type="entry name" value="IlvD/EDD N-terminal domain-like"/>
    <property type="match status" value="1"/>
</dbReference>
<dbReference type="SUPFAM" id="SSF52016">
    <property type="entry name" value="LeuD/IlvD-like"/>
    <property type="match status" value="1"/>
</dbReference>